<dbReference type="EC" id="2.7.1.2" evidence="1"/>
<dbReference type="EMBL" id="AE013598">
    <property type="protein sequence ID" value="AAW75569.1"/>
    <property type="molecule type" value="Genomic_DNA"/>
</dbReference>
<dbReference type="SMR" id="Q5H0F2"/>
<dbReference type="STRING" id="291331.XOO2315"/>
<dbReference type="KEGG" id="xoo:XOO2315"/>
<dbReference type="HOGENOM" id="CLU_042582_1_0_6"/>
<dbReference type="Proteomes" id="UP000006735">
    <property type="component" value="Chromosome"/>
</dbReference>
<dbReference type="GO" id="GO:0005829">
    <property type="term" value="C:cytosol"/>
    <property type="evidence" value="ECO:0007669"/>
    <property type="project" value="TreeGrafter"/>
</dbReference>
<dbReference type="GO" id="GO:0005524">
    <property type="term" value="F:ATP binding"/>
    <property type="evidence" value="ECO:0007669"/>
    <property type="project" value="UniProtKB-UniRule"/>
</dbReference>
<dbReference type="GO" id="GO:0005536">
    <property type="term" value="F:D-glucose binding"/>
    <property type="evidence" value="ECO:0007669"/>
    <property type="project" value="InterPro"/>
</dbReference>
<dbReference type="GO" id="GO:0004340">
    <property type="term" value="F:glucokinase activity"/>
    <property type="evidence" value="ECO:0007669"/>
    <property type="project" value="UniProtKB-UniRule"/>
</dbReference>
<dbReference type="GO" id="GO:0006096">
    <property type="term" value="P:glycolytic process"/>
    <property type="evidence" value="ECO:0007669"/>
    <property type="project" value="UniProtKB-UniRule"/>
</dbReference>
<dbReference type="CDD" id="cd24008">
    <property type="entry name" value="ASKHA_NBD_GLK"/>
    <property type="match status" value="1"/>
</dbReference>
<dbReference type="FunFam" id="3.40.367.20:FF:000007">
    <property type="entry name" value="Glucokinase"/>
    <property type="match status" value="1"/>
</dbReference>
<dbReference type="Gene3D" id="3.30.420.40">
    <property type="match status" value="1"/>
</dbReference>
<dbReference type="Gene3D" id="3.40.367.20">
    <property type="match status" value="1"/>
</dbReference>
<dbReference type="HAMAP" id="MF_00524">
    <property type="entry name" value="Glucokinase"/>
    <property type="match status" value="1"/>
</dbReference>
<dbReference type="InterPro" id="IPR043129">
    <property type="entry name" value="ATPase_NBD"/>
</dbReference>
<dbReference type="InterPro" id="IPR050201">
    <property type="entry name" value="Bacterial_glucokinase"/>
</dbReference>
<dbReference type="InterPro" id="IPR003836">
    <property type="entry name" value="Glucokinase"/>
</dbReference>
<dbReference type="NCBIfam" id="TIGR00749">
    <property type="entry name" value="glk"/>
    <property type="match status" value="1"/>
</dbReference>
<dbReference type="PANTHER" id="PTHR47690">
    <property type="entry name" value="GLUCOKINASE"/>
    <property type="match status" value="1"/>
</dbReference>
<dbReference type="PANTHER" id="PTHR47690:SF1">
    <property type="entry name" value="GLUCOKINASE"/>
    <property type="match status" value="1"/>
</dbReference>
<dbReference type="Pfam" id="PF02685">
    <property type="entry name" value="Glucokinase"/>
    <property type="match status" value="1"/>
</dbReference>
<dbReference type="SUPFAM" id="SSF53067">
    <property type="entry name" value="Actin-like ATPase domain"/>
    <property type="match status" value="1"/>
</dbReference>
<gene>
    <name evidence="1" type="primary">glk</name>
    <name type="ordered locus">XOO2315</name>
</gene>
<protein>
    <recommendedName>
        <fullName evidence="1">Glucokinase</fullName>
        <ecNumber evidence="1">2.7.1.2</ecNumber>
    </recommendedName>
    <alternativeName>
        <fullName evidence="1">Glucose kinase</fullName>
    </alternativeName>
</protein>
<keyword id="KW-0067">ATP-binding</keyword>
<keyword id="KW-0963">Cytoplasm</keyword>
<keyword id="KW-0324">Glycolysis</keyword>
<keyword id="KW-0418">Kinase</keyword>
<keyword id="KW-0547">Nucleotide-binding</keyword>
<keyword id="KW-1185">Reference proteome</keyword>
<keyword id="KW-0808">Transferase</keyword>
<accession>Q5H0F2</accession>
<organism>
    <name type="scientific">Xanthomonas oryzae pv. oryzae (strain KACC10331 / KXO85)</name>
    <dbReference type="NCBI Taxonomy" id="291331"/>
    <lineage>
        <taxon>Bacteria</taxon>
        <taxon>Pseudomonadati</taxon>
        <taxon>Pseudomonadota</taxon>
        <taxon>Gammaproteobacteria</taxon>
        <taxon>Lysobacterales</taxon>
        <taxon>Lysobacteraceae</taxon>
        <taxon>Xanthomonas</taxon>
    </lineage>
</organism>
<feature type="chain" id="PRO_0000268792" description="Glucokinase">
    <location>
        <begin position="1"/>
        <end position="335"/>
    </location>
</feature>
<feature type="binding site" evidence="1">
    <location>
        <begin position="11"/>
        <end position="16"/>
    </location>
    <ligand>
        <name>ATP</name>
        <dbReference type="ChEBI" id="CHEBI:30616"/>
    </ligand>
</feature>
<comment type="catalytic activity">
    <reaction evidence="1">
        <text>D-glucose + ATP = D-glucose 6-phosphate + ADP + H(+)</text>
        <dbReference type="Rhea" id="RHEA:17825"/>
        <dbReference type="ChEBI" id="CHEBI:4167"/>
        <dbReference type="ChEBI" id="CHEBI:15378"/>
        <dbReference type="ChEBI" id="CHEBI:30616"/>
        <dbReference type="ChEBI" id="CHEBI:61548"/>
        <dbReference type="ChEBI" id="CHEBI:456216"/>
        <dbReference type="EC" id="2.7.1.2"/>
    </reaction>
</comment>
<comment type="subcellular location">
    <subcellularLocation>
        <location evidence="1">Cytoplasm</location>
    </subcellularLocation>
</comment>
<comment type="similarity">
    <text evidence="1">Belongs to the bacterial glucokinase family.</text>
</comment>
<name>GLK_XANOR</name>
<sequence>MTAPSKPVLVADIGGTNARFALADVDASVPLLDDTSREFAVVDFTSLGEAARYYLDQIGVQATQGVFAVAGRVDGDEARITNHPWVISRSRTASMLGFSTLHLINDFAAQAMAISLLRPQDVVQVGGASWRPAPIDQPRNYGVIGPGTGLGVGGLIIRHGRCFPLETEGGHVSFPPGTPEEIRILEILSEQFGRVSNERLICGPGLVNIHRALSEIAGVDPGPLQPKDITARAAAGDPRSSRTIDLFCAIFGAIAGDMVLMQGAWDGVFLTGGLVPKVLDSLQHSGFRQRFEHKGRFSAIMSRVPSLAVMHPHAGLLGAAAYAVDAQRQPPGEQR</sequence>
<reference key="1">
    <citation type="journal article" date="2005" name="Nucleic Acids Res.">
        <title>The genome sequence of Xanthomonas oryzae pathovar oryzae KACC10331, the bacterial blight pathogen of rice.</title>
        <authorList>
            <person name="Lee B.-M."/>
            <person name="Park Y.-J."/>
            <person name="Park D.-S."/>
            <person name="Kang H.-W."/>
            <person name="Kim J.-G."/>
            <person name="Song E.-S."/>
            <person name="Park I.-C."/>
            <person name="Yoon U.-H."/>
            <person name="Hahn J.-H."/>
            <person name="Koo B.-S."/>
            <person name="Lee G.-B."/>
            <person name="Kim H."/>
            <person name="Park H.-S."/>
            <person name="Yoon K.-O."/>
            <person name="Kim J.-H."/>
            <person name="Jung C.-H."/>
            <person name="Koh N.-H."/>
            <person name="Seo J.-S."/>
            <person name="Go S.-J."/>
        </authorList>
    </citation>
    <scope>NUCLEOTIDE SEQUENCE [LARGE SCALE GENOMIC DNA]</scope>
    <source>
        <strain>KACC10331 / KXO85</strain>
    </source>
</reference>
<evidence type="ECO:0000255" key="1">
    <source>
        <dbReference type="HAMAP-Rule" id="MF_00524"/>
    </source>
</evidence>
<proteinExistence type="inferred from homology"/>